<evidence type="ECO:0000250" key="1"/>
<evidence type="ECO:0000255" key="2"/>
<evidence type="ECO:0000305" key="3"/>
<accession>O49849</accession>
<proteinExistence type="inferred from homology"/>
<reference key="1">
    <citation type="online journal article" date="1998" name="Plant Gene Register">
        <title>The GDCST gene encoding T-protein of the glycine cleavage system in the C3-C4 intermediate plant Flaveria anomala.</title>
        <authorList>
            <person name="Nan Q."/>
            <person name="Chu C.-C."/>
            <person name="Bauwe H."/>
        </authorList>
        <locator>PGR98-006</locator>
    </citation>
    <scope>NUCLEOTIDE SEQUENCE [GENOMIC DNA]</scope>
    <source>
        <tissue>Leaf</tissue>
    </source>
</reference>
<feature type="transit peptide" description="Mitochondrion" evidence="2">
    <location>
        <begin position="1"/>
        <end position="29"/>
    </location>
</feature>
<feature type="chain" id="PRO_0000010759" description="Aminomethyltransferase, mitochondrial">
    <location>
        <begin position="30"/>
        <end position="407"/>
    </location>
</feature>
<feature type="binding site" evidence="1">
    <location>
        <position position="234"/>
    </location>
    <ligand>
        <name>substrate</name>
    </ligand>
</feature>
<feature type="binding site" evidence="1">
    <location>
        <position position="265"/>
    </location>
    <ligand>
        <name>substrate</name>
    </ligand>
</feature>
<feature type="binding site" evidence="1">
    <location>
        <position position="403"/>
    </location>
    <ligand>
        <name>substrate</name>
    </ligand>
</feature>
<name>GCST_FLAAN</name>
<sequence length="407" mass="44279">MRGGLWQLGQSITRRLGQSDKKTIVRRCYASEADLKKTVLYDFHVAHGGKMVPFAGWSMPIQYKDSIMDSTINCRENGSLFDVSHMCGLSLKGKDCVAFLEKLVVADVAGLAPGTGSLTVFTNEKGGAIDDSVITKVTDDHIYLVVNAGCRDKDLAHIEEHMKAFKAKGGDVSWHIYDERSLLALQGPLAGSTLQHLTKEDLSKMYFGDFRIIDINGSKCFLTRTGYTGEDGFEISVPSENAVDLAKAILEKSEGKVRLTGLGARDSLRLEAGLCLYGNDMEQHITPVEAGLTWAIGKRRRAEGGFLGADVILKQIADGPAIRRVGLFSTGPPARSHSEIQNEKGENIGEVTSGGFSPCLKKNIGMGYVKSGLHKPGTKLKIVIRGKTYEGSVTKMPFVPTKYYKPA</sequence>
<comment type="function">
    <text>The glycine cleavage system catalyzes the degradation of glycine.</text>
</comment>
<comment type="catalytic activity">
    <reaction>
        <text>N(6)-[(R)-S(8)-aminomethyldihydrolipoyl]-L-lysyl-[protein] + (6S)-5,6,7,8-tetrahydrofolate = N(6)-[(R)-dihydrolipoyl]-L-lysyl-[protein] + (6R)-5,10-methylene-5,6,7,8-tetrahydrofolate + NH4(+)</text>
        <dbReference type="Rhea" id="RHEA:16945"/>
        <dbReference type="Rhea" id="RHEA-COMP:10475"/>
        <dbReference type="Rhea" id="RHEA-COMP:10492"/>
        <dbReference type="ChEBI" id="CHEBI:15636"/>
        <dbReference type="ChEBI" id="CHEBI:28938"/>
        <dbReference type="ChEBI" id="CHEBI:57453"/>
        <dbReference type="ChEBI" id="CHEBI:83100"/>
        <dbReference type="ChEBI" id="CHEBI:83143"/>
        <dbReference type="EC" id="2.1.2.10"/>
    </reaction>
</comment>
<comment type="subunit">
    <text>The glycine cleavage system is composed of four proteins: P, T, L and H.</text>
</comment>
<comment type="subcellular location">
    <subcellularLocation>
        <location>Mitochondrion</location>
    </subcellularLocation>
</comment>
<comment type="similarity">
    <text evidence="3">Belongs to the GcvT family.</text>
</comment>
<dbReference type="EC" id="2.1.2.10"/>
<dbReference type="EMBL" id="Z71184">
    <property type="protein sequence ID" value="CAA94902.1"/>
    <property type="molecule type" value="Genomic_DNA"/>
</dbReference>
<dbReference type="SMR" id="O49849"/>
<dbReference type="GO" id="GO:0005960">
    <property type="term" value="C:glycine cleavage complex"/>
    <property type="evidence" value="ECO:0007669"/>
    <property type="project" value="InterPro"/>
</dbReference>
<dbReference type="GO" id="GO:0005739">
    <property type="term" value="C:mitochondrion"/>
    <property type="evidence" value="ECO:0007669"/>
    <property type="project" value="UniProtKB-SubCell"/>
</dbReference>
<dbReference type="GO" id="GO:0004047">
    <property type="term" value="F:aminomethyltransferase activity"/>
    <property type="evidence" value="ECO:0007669"/>
    <property type="project" value="UniProtKB-EC"/>
</dbReference>
<dbReference type="GO" id="GO:0008483">
    <property type="term" value="F:transaminase activity"/>
    <property type="evidence" value="ECO:0007669"/>
    <property type="project" value="UniProtKB-KW"/>
</dbReference>
<dbReference type="GO" id="GO:0006546">
    <property type="term" value="P:glycine catabolic process"/>
    <property type="evidence" value="ECO:0007669"/>
    <property type="project" value="InterPro"/>
</dbReference>
<dbReference type="FunFam" id="2.40.30.110:FF:000002">
    <property type="entry name" value="Aminomethyltransferase"/>
    <property type="match status" value="1"/>
</dbReference>
<dbReference type="FunFam" id="3.30.70.1400:FF:000001">
    <property type="entry name" value="Aminomethyltransferase"/>
    <property type="match status" value="1"/>
</dbReference>
<dbReference type="FunFam" id="4.10.1250.10:FF:000002">
    <property type="entry name" value="Aminomethyltransferase"/>
    <property type="match status" value="1"/>
</dbReference>
<dbReference type="Gene3D" id="2.40.30.110">
    <property type="entry name" value="Aminomethyltransferase beta-barrel domains"/>
    <property type="match status" value="1"/>
</dbReference>
<dbReference type="Gene3D" id="3.30.70.1400">
    <property type="entry name" value="Aminomethyltransferase beta-barrel domains"/>
    <property type="match status" value="1"/>
</dbReference>
<dbReference type="Gene3D" id="4.10.1250.10">
    <property type="entry name" value="Aminomethyltransferase fragment"/>
    <property type="match status" value="1"/>
</dbReference>
<dbReference type="Gene3D" id="3.30.1360.120">
    <property type="entry name" value="Probable tRNA modification gtpase trme, domain 1"/>
    <property type="match status" value="1"/>
</dbReference>
<dbReference type="InterPro" id="IPR006223">
    <property type="entry name" value="GCS_T"/>
</dbReference>
<dbReference type="InterPro" id="IPR013977">
    <property type="entry name" value="GCST_C"/>
</dbReference>
<dbReference type="InterPro" id="IPR006222">
    <property type="entry name" value="GCV_T_N"/>
</dbReference>
<dbReference type="InterPro" id="IPR028896">
    <property type="entry name" value="GcvT/YgfZ/DmdA"/>
</dbReference>
<dbReference type="InterPro" id="IPR029043">
    <property type="entry name" value="GcvT/YgfZ_C"/>
</dbReference>
<dbReference type="InterPro" id="IPR027266">
    <property type="entry name" value="TrmE/GcvT_dom1"/>
</dbReference>
<dbReference type="NCBIfam" id="TIGR00528">
    <property type="entry name" value="gcvT"/>
    <property type="match status" value="1"/>
</dbReference>
<dbReference type="NCBIfam" id="NF001567">
    <property type="entry name" value="PRK00389.1"/>
    <property type="match status" value="1"/>
</dbReference>
<dbReference type="PANTHER" id="PTHR43757">
    <property type="entry name" value="AMINOMETHYLTRANSFERASE"/>
    <property type="match status" value="1"/>
</dbReference>
<dbReference type="PANTHER" id="PTHR43757:SF2">
    <property type="entry name" value="AMINOMETHYLTRANSFERASE, MITOCHONDRIAL"/>
    <property type="match status" value="1"/>
</dbReference>
<dbReference type="Pfam" id="PF01571">
    <property type="entry name" value="GCV_T"/>
    <property type="match status" value="1"/>
</dbReference>
<dbReference type="Pfam" id="PF08669">
    <property type="entry name" value="GCV_T_C"/>
    <property type="match status" value="1"/>
</dbReference>
<dbReference type="PIRSF" id="PIRSF006487">
    <property type="entry name" value="GcvT"/>
    <property type="match status" value="1"/>
</dbReference>
<dbReference type="SUPFAM" id="SSF101790">
    <property type="entry name" value="Aminomethyltransferase beta-barrel domain"/>
    <property type="match status" value="1"/>
</dbReference>
<dbReference type="SUPFAM" id="SSF103025">
    <property type="entry name" value="Folate-binding domain"/>
    <property type="match status" value="1"/>
</dbReference>
<organism>
    <name type="scientific">Flaveria anomala</name>
    <name type="common">Yellowtops</name>
    <dbReference type="NCBI Taxonomy" id="35877"/>
    <lineage>
        <taxon>Eukaryota</taxon>
        <taxon>Viridiplantae</taxon>
        <taxon>Streptophyta</taxon>
        <taxon>Embryophyta</taxon>
        <taxon>Tracheophyta</taxon>
        <taxon>Spermatophyta</taxon>
        <taxon>Magnoliopsida</taxon>
        <taxon>eudicotyledons</taxon>
        <taxon>Gunneridae</taxon>
        <taxon>Pentapetalae</taxon>
        <taxon>asterids</taxon>
        <taxon>campanulids</taxon>
        <taxon>Asterales</taxon>
        <taxon>Asteraceae</taxon>
        <taxon>Asteroideae</taxon>
        <taxon>Heliantheae alliance</taxon>
        <taxon>Tageteae</taxon>
        <taxon>Flaveria</taxon>
    </lineage>
</organism>
<protein>
    <recommendedName>
        <fullName>Aminomethyltransferase, mitochondrial</fullName>
        <ecNumber>2.1.2.10</ecNumber>
    </recommendedName>
    <alternativeName>
        <fullName>Glycine cleavage system T protein</fullName>
        <shortName>GCVT</shortName>
    </alternativeName>
</protein>
<keyword id="KW-0032">Aminotransferase</keyword>
<keyword id="KW-0496">Mitochondrion</keyword>
<keyword id="KW-0808">Transferase</keyword>
<keyword id="KW-0809">Transit peptide</keyword>
<gene>
    <name type="primary">GDCST</name>
</gene>